<evidence type="ECO:0000250" key="1">
    <source>
        <dbReference type="UniProtKB" id="P11473"/>
    </source>
</evidence>
<evidence type="ECO:0000250" key="2">
    <source>
        <dbReference type="UniProtKB" id="P13053"/>
    </source>
</evidence>
<evidence type="ECO:0000255" key="3">
    <source>
        <dbReference type="PROSITE-ProRule" id="PRU00407"/>
    </source>
</evidence>
<evidence type="ECO:0000255" key="4">
    <source>
        <dbReference type="PROSITE-ProRule" id="PRU01189"/>
    </source>
</evidence>
<evidence type="ECO:0000256" key="5">
    <source>
        <dbReference type="SAM" id="MobiDB-lite"/>
    </source>
</evidence>
<evidence type="ECO:0000269" key="6">
    <source>
    </source>
</evidence>
<evidence type="ECO:0000305" key="7"/>
<dbReference type="EMBL" id="U91846">
    <property type="protein sequence ID" value="AAB58585.1"/>
    <property type="molecule type" value="mRNA"/>
</dbReference>
<dbReference type="RefSeq" id="NP_001079288.1">
    <property type="nucleotide sequence ID" value="NM_001085819.2"/>
</dbReference>
<dbReference type="SMR" id="O13124"/>
<dbReference type="GeneID" id="378575"/>
<dbReference type="KEGG" id="xla:378575"/>
<dbReference type="AGR" id="Xenbase:XB-GENE-864847"/>
<dbReference type="CTD" id="378575"/>
<dbReference type="Xenbase" id="XB-GENE-864847">
    <property type="gene designation" value="vdr.S"/>
</dbReference>
<dbReference type="OrthoDB" id="6352325at2759"/>
<dbReference type="Proteomes" id="UP000186698">
    <property type="component" value="Chromosome 2S"/>
</dbReference>
<dbReference type="Bgee" id="378575">
    <property type="expression patterns" value="Expressed in zone of skin and 9 other cell types or tissues"/>
</dbReference>
<dbReference type="GO" id="GO:0005737">
    <property type="term" value="C:cytoplasm"/>
    <property type="evidence" value="ECO:0007669"/>
    <property type="project" value="UniProtKB-SubCell"/>
</dbReference>
<dbReference type="GO" id="GO:0005634">
    <property type="term" value="C:nucleus"/>
    <property type="evidence" value="ECO:0000318"/>
    <property type="project" value="GO_Central"/>
</dbReference>
<dbReference type="GO" id="GO:0004879">
    <property type="term" value="F:nuclear receptor activity"/>
    <property type="evidence" value="ECO:0000250"/>
    <property type="project" value="UniProtKB"/>
</dbReference>
<dbReference type="GO" id="GO:0000978">
    <property type="term" value="F:RNA polymerase II cis-regulatory region sequence-specific DNA binding"/>
    <property type="evidence" value="ECO:0000318"/>
    <property type="project" value="GO_Central"/>
</dbReference>
<dbReference type="GO" id="GO:0070644">
    <property type="term" value="F:vitamin D response element binding"/>
    <property type="evidence" value="ECO:0007669"/>
    <property type="project" value="TreeGrafter"/>
</dbReference>
<dbReference type="GO" id="GO:0008270">
    <property type="term" value="F:zinc ion binding"/>
    <property type="evidence" value="ECO:0007669"/>
    <property type="project" value="UniProtKB-KW"/>
</dbReference>
<dbReference type="GO" id="GO:0030154">
    <property type="term" value="P:cell differentiation"/>
    <property type="evidence" value="ECO:0000318"/>
    <property type="project" value="GO_Central"/>
</dbReference>
<dbReference type="GO" id="GO:0030522">
    <property type="term" value="P:intracellular receptor signaling pathway"/>
    <property type="evidence" value="ECO:0000318"/>
    <property type="project" value="GO_Central"/>
</dbReference>
<dbReference type="GO" id="GO:0000122">
    <property type="term" value="P:negative regulation of transcription by RNA polymerase II"/>
    <property type="evidence" value="ECO:0000318"/>
    <property type="project" value="GO_Central"/>
</dbReference>
<dbReference type="GO" id="GO:0045944">
    <property type="term" value="P:positive regulation of transcription by RNA polymerase II"/>
    <property type="evidence" value="ECO:0000318"/>
    <property type="project" value="GO_Central"/>
</dbReference>
<dbReference type="GO" id="GO:0070561">
    <property type="term" value="P:vitamin D receptor signaling pathway"/>
    <property type="evidence" value="ECO:0000250"/>
    <property type="project" value="UniProtKB"/>
</dbReference>
<dbReference type="CDD" id="cd06955">
    <property type="entry name" value="NR_DBD_VDR"/>
    <property type="match status" value="1"/>
</dbReference>
<dbReference type="CDD" id="cd06933">
    <property type="entry name" value="NR_LBD_VDR"/>
    <property type="match status" value="1"/>
</dbReference>
<dbReference type="FunFam" id="3.30.50.10:FF:000023">
    <property type="entry name" value="Vitamin D3 receptor"/>
    <property type="match status" value="1"/>
</dbReference>
<dbReference type="FunFam" id="1.10.565.10:FF:000021">
    <property type="entry name" value="Vitamin D3 receptor B"/>
    <property type="match status" value="1"/>
</dbReference>
<dbReference type="Gene3D" id="3.30.50.10">
    <property type="entry name" value="Erythroid Transcription Factor GATA-1, subunit A"/>
    <property type="match status" value="1"/>
</dbReference>
<dbReference type="Gene3D" id="1.10.565.10">
    <property type="entry name" value="Retinoid X Receptor"/>
    <property type="match status" value="1"/>
</dbReference>
<dbReference type="InterPro" id="IPR042153">
    <property type="entry name" value="DBD_VDR"/>
</dbReference>
<dbReference type="InterPro" id="IPR035500">
    <property type="entry name" value="NHR-like_dom_sf"/>
</dbReference>
<dbReference type="InterPro" id="IPR000536">
    <property type="entry name" value="Nucl_hrmn_rcpt_lig-bd"/>
</dbReference>
<dbReference type="InterPro" id="IPR050234">
    <property type="entry name" value="Nuclear_hormone_rcpt_NR1"/>
</dbReference>
<dbReference type="InterPro" id="IPR001723">
    <property type="entry name" value="Nuclear_hrmn_rcpt"/>
</dbReference>
<dbReference type="InterPro" id="IPR000324">
    <property type="entry name" value="VitD_rcpt"/>
</dbReference>
<dbReference type="InterPro" id="IPR001628">
    <property type="entry name" value="Znf_hrmn_rcpt"/>
</dbReference>
<dbReference type="InterPro" id="IPR013088">
    <property type="entry name" value="Znf_NHR/GATA"/>
</dbReference>
<dbReference type="PANTHER" id="PTHR24082">
    <property type="entry name" value="NUCLEAR HORMONE RECEPTOR"/>
    <property type="match status" value="1"/>
</dbReference>
<dbReference type="PANTHER" id="PTHR24082:SF38">
    <property type="entry name" value="VITAMIN D3 RECEPTOR"/>
    <property type="match status" value="1"/>
</dbReference>
<dbReference type="Pfam" id="PF00104">
    <property type="entry name" value="Hormone_recep"/>
    <property type="match status" value="1"/>
</dbReference>
<dbReference type="Pfam" id="PF00105">
    <property type="entry name" value="zf-C4"/>
    <property type="match status" value="1"/>
</dbReference>
<dbReference type="PRINTS" id="PR00398">
    <property type="entry name" value="STRDHORMONER"/>
</dbReference>
<dbReference type="PRINTS" id="PR00047">
    <property type="entry name" value="STROIDFINGER"/>
</dbReference>
<dbReference type="PRINTS" id="PR00350">
    <property type="entry name" value="VITAMINDR"/>
</dbReference>
<dbReference type="SMART" id="SM00430">
    <property type="entry name" value="HOLI"/>
    <property type="match status" value="1"/>
</dbReference>
<dbReference type="SMART" id="SM00399">
    <property type="entry name" value="ZnF_C4"/>
    <property type="match status" value="1"/>
</dbReference>
<dbReference type="SUPFAM" id="SSF57716">
    <property type="entry name" value="Glucocorticoid receptor-like (DNA-binding domain)"/>
    <property type="match status" value="1"/>
</dbReference>
<dbReference type="SUPFAM" id="SSF48508">
    <property type="entry name" value="Nuclear receptor ligand-binding domain"/>
    <property type="match status" value="1"/>
</dbReference>
<dbReference type="PROSITE" id="PS51843">
    <property type="entry name" value="NR_LBD"/>
    <property type="match status" value="1"/>
</dbReference>
<dbReference type="PROSITE" id="PS00031">
    <property type="entry name" value="NUCLEAR_REC_DBD_1"/>
    <property type="match status" value="1"/>
</dbReference>
<dbReference type="PROSITE" id="PS51030">
    <property type="entry name" value="NUCLEAR_REC_DBD_2"/>
    <property type="match status" value="1"/>
</dbReference>
<sequence length="422" mass="48188">MEFMAATTSIADTDMEFDKNVPRICGVCGDKATGFHFNAMTCEGCKGFFRRSMKRKAMFTCPFNGDCRITKDNRRHCQSCRLKRCVDIGMMKEFILTDEEVQRKRQMINKRKSEEALKESMRPKISDEQQKMIDILLEAHRKTFDTTYSDFNKFRPPVRENVDPFRRITRSSSVHTQGSPSEDSDVFTSSPDSSEHGFFSASLFGQFEYSSMGGKSGELSMLPHIADLVSYSIQKIIGFAKMIPGFRDLIAEDQIALLKSSVIEVIMLRSNQSFSLDDMSWTCGSEDFKYKVDDVTQAGHNMELLEPLVKFQVGLKKLDLHEEEHVLLMAICILSPDRPGLQDKALVESIQDRLSSTLQTYILCKHPPPGSRLLYAKMIQKLADLRSLNEEHSKQYRSISFLPEHSMKLTPLMLEVFSDEIP</sequence>
<gene>
    <name type="primary">vdr</name>
    <name type="synonym">nr1i1</name>
</gene>
<feature type="chain" id="PRO_0000053546" description="Vitamin D3 receptor">
    <location>
        <begin position="1"/>
        <end position="422"/>
    </location>
</feature>
<feature type="domain" description="NR LBD" evidence="4">
    <location>
        <begin position="128"/>
        <end position="418"/>
    </location>
</feature>
<feature type="DNA-binding region" description="Nuclear receptor" evidence="3">
    <location>
        <begin position="22"/>
        <end position="90"/>
    </location>
</feature>
<feature type="zinc finger region" description="NR C4-type" evidence="3">
    <location>
        <begin position="25"/>
        <end position="45"/>
    </location>
</feature>
<feature type="zinc finger region" description="NR C4-type" evidence="3">
    <location>
        <begin position="61"/>
        <end position="85"/>
    </location>
</feature>
<feature type="region of interest" description="Hinge" evidence="1">
    <location>
        <begin position="98"/>
        <end position="127"/>
    </location>
</feature>
<feature type="region of interest" description="Disordered" evidence="5">
    <location>
        <begin position="170"/>
        <end position="191"/>
    </location>
</feature>
<feature type="region of interest" description="Interaction with coactivator LXXLL motif" evidence="2">
    <location>
        <begin position="241"/>
        <end position="259"/>
    </location>
</feature>
<feature type="short sequence motif" description="9aaTAD" evidence="1">
    <location>
        <begin position="411"/>
        <end position="419"/>
    </location>
</feature>
<feature type="binding site" evidence="1">
    <location>
        <position position="25"/>
    </location>
    <ligand>
        <name>Zn(2+)</name>
        <dbReference type="ChEBI" id="CHEBI:29105"/>
        <label>1</label>
    </ligand>
</feature>
<feature type="binding site" evidence="1">
    <location>
        <position position="28"/>
    </location>
    <ligand>
        <name>Zn(2+)</name>
        <dbReference type="ChEBI" id="CHEBI:29105"/>
        <label>1</label>
    </ligand>
</feature>
<feature type="binding site" evidence="1">
    <location>
        <position position="42"/>
    </location>
    <ligand>
        <name>Zn(2+)</name>
        <dbReference type="ChEBI" id="CHEBI:29105"/>
        <label>1</label>
    </ligand>
</feature>
<feature type="binding site" evidence="1">
    <location>
        <position position="45"/>
    </location>
    <ligand>
        <name>Zn(2+)</name>
        <dbReference type="ChEBI" id="CHEBI:29105"/>
        <label>1</label>
    </ligand>
</feature>
<feature type="binding site" evidence="1">
    <location>
        <position position="61"/>
    </location>
    <ligand>
        <name>Zn(2+)</name>
        <dbReference type="ChEBI" id="CHEBI:29105"/>
        <label>2</label>
    </ligand>
</feature>
<feature type="binding site" evidence="1">
    <location>
        <position position="67"/>
    </location>
    <ligand>
        <name>Zn(2+)</name>
        <dbReference type="ChEBI" id="CHEBI:29105"/>
        <label>2</label>
    </ligand>
</feature>
<feature type="binding site" evidence="1">
    <location>
        <position position="77"/>
    </location>
    <ligand>
        <name>Zn(2+)</name>
        <dbReference type="ChEBI" id="CHEBI:29105"/>
        <label>2</label>
    </ligand>
</feature>
<feature type="binding site" evidence="1">
    <location>
        <position position="80"/>
    </location>
    <ligand>
        <name>Zn(2+)</name>
        <dbReference type="ChEBI" id="CHEBI:29105"/>
        <label>2</label>
    </ligand>
</feature>
<feature type="binding site" evidence="1">
    <location>
        <position position="232"/>
    </location>
    <ligand>
        <name>calcitriol</name>
        <dbReference type="ChEBI" id="CHEBI:17823"/>
    </ligand>
</feature>
<feature type="binding site" evidence="1">
    <location>
        <position position="269"/>
    </location>
    <ligand>
        <name>calcitriol</name>
        <dbReference type="ChEBI" id="CHEBI:17823"/>
    </ligand>
</feature>
<feature type="binding site" evidence="1">
    <location>
        <position position="273"/>
    </location>
    <ligand>
        <name>calcitriol</name>
        <dbReference type="ChEBI" id="CHEBI:17823"/>
    </ligand>
</feature>
<feature type="binding site" evidence="1">
    <location>
        <position position="300"/>
    </location>
    <ligand>
        <name>calcitriol</name>
        <dbReference type="ChEBI" id="CHEBI:17823"/>
    </ligand>
</feature>
<feature type="binding site" evidence="1">
    <location>
        <position position="392"/>
    </location>
    <ligand>
        <name>calcitriol</name>
        <dbReference type="ChEBI" id="CHEBI:17823"/>
    </ligand>
</feature>
<comment type="function">
    <text evidence="1 2">Nuclear receptor for calcitriol, the active form of vitamin D3 which mediates the action of this vitamin on cells. Enters the nucleus upon vitamin D3 binding where it forms heterodimers with the retinoid X receptor/RXR. The VDR-RXR heterodimers bind to specific response elements on DNA and activate the transcription of vitamin D3-responsive target genes (By similarity). Plays a central role in calcium homeostasis (By similarity). Also functions as a receptor for the secondary bile acid lithocholic acid (LCA) and its metabolites (By similarity).</text>
</comment>
<comment type="subunit">
    <text evidence="1">Homodimer in the absence of bound vitamin D3. Heterodimer with RXRA after vitamin D3 binding.</text>
</comment>
<comment type="subcellular location">
    <subcellularLocation>
        <location evidence="1 3">Nucleus</location>
    </subcellularLocation>
    <subcellularLocation>
        <location evidence="1">Cytoplasm</location>
    </subcellularLocation>
    <text evidence="1">Localizes mainly to the nucleus. Translocated into the nucleus via both ligand-dependent and ligand-independent pathways; ligand-independent nuclear translocation is mediated by IPO4.</text>
</comment>
<comment type="tissue specificity">
    <text evidence="6">Detected in all tissues examined. Highest level in small intestine and skin.</text>
</comment>
<comment type="developmental stage">
    <text evidence="6">First detected at stage 13. Increases gradually and peaks at stage 57-61 then decreases to the level seen in adult.</text>
</comment>
<comment type="domain">
    <text evidence="1">Composed of three domains: a modulating N-terminal domain, a DNA-binding domain and a C-terminal ligand-binding domain.</text>
</comment>
<comment type="domain">
    <text evidence="1">The 9aaTAD motif is a transactivation domain present in a large number of yeast and animal transcription factors.</text>
</comment>
<comment type="similarity">
    <text evidence="7">Belongs to the nuclear hormone receptor family. NR1 subfamily.</text>
</comment>
<reference key="1">
    <citation type="journal article" date="1997" name="Endocrinology">
        <title>Cloning and characterization of the vitamin D receptor from Xenopus laevis.</title>
        <authorList>
            <person name="Li Y.C."/>
            <person name="Bergwitz C."/>
            <person name="Jueppner H."/>
            <person name="Demay M.B."/>
        </authorList>
    </citation>
    <scope>NUCLEOTIDE SEQUENCE [MRNA]</scope>
    <scope>TISSUE SPECIFICITY</scope>
    <scope>DEVELOPMENTAL STAGE</scope>
    <source>
        <tissue>Kidney</tissue>
    </source>
</reference>
<protein>
    <recommendedName>
        <fullName>Vitamin D3 receptor</fullName>
        <shortName>VDR</shortName>
    </recommendedName>
    <alternativeName>
        <fullName>1,25-dihydroxyvitamin D3 receptor</fullName>
    </alternativeName>
    <alternativeName>
        <fullName>Nuclear receptor subfamily 1 group I member 1</fullName>
    </alternativeName>
</protein>
<proteinExistence type="evidence at transcript level"/>
<organism>
    <name type="scientific">Xenopus laevis</name>
    <name type="common">African clawed frog</name>
    <dbReference type="NCBI Taxonomy" id="8355"/>
    <lineage>
        <taxon>Eukaryota</taxon>
        <taxon>Metazoa</taxon>
        <taxon>Chordata</taxon>
        <taxon>Craniata</taxon>
        <taxon>Vertebrata</taxon>
        <taxon>Euteleostomi</taxon>
        <taxon>Amphibia</taxon>
        <taxon>Batrachia</taxon>
        <taxon>Anura</taxon>
        <taxon>Pipoidea</taxon>
        <taxon>Pipidae</taxon>
        <taxon>Xenopodinae</taxon>
        <taxon>Xenopus</taxon>
        <taxon>Xenopus</taxon>
    </lineage>
</organism>
<accession>O13124</accession>
<keyword id="KW-0963">Cytoplasm</keyword>
<keyword id="KW-0238">DNA-binding</keyword>
<keyword id="KW-0479">Metal-binding</keyword>
<keyword id="KW-0539">Nucleus</keyword>
<keyword id="KW-0675">Receptor</keyword>
<keyword id="KW-1185">Reference proteome</keyword>
<keyword id="KW-0804">Transcription</keyword>
<keyword id="KW-0805">Transcription regulation</keyword>
<keyword id="KW-0862">Zinc</keyword>
<keyword id="KW-0863">Zinc-finger</keyword>
<name>VDR_XENLA</name>